<keyword id="KW-0687">Ribonucleoprotein</keyword>
<keyword id="KW-0689">Ribosomal protein</keyword>
<keyword id="KW-0694">RNA-binding</keyword>
<keyword id="KW-0699">rRNA-binding</keyword>
<proteinExistence type="inferred from homology"/>
<comment type="function">
    <text evidence="1">This protein binds specifically to 23S rRNA; its binding is stimulated by other ribosomal proteins, e.g. L4, L17, and L20. It is important during the early stages of 50S assembly. It makes multiple contacts with different domains of the 23S rRNA in the assembled 50S subunit and ribosome (By similarity).</text>
</comment>
<comment type="function">
    <text evidence="1">The globular domain of the protein is located near the polypeptide exit tunnel on the outside of the subunit, while an extended beta-hairpin is found that lines the wall of the exit tunnel in the center of the 70S ribosome.</text>
</comment>
<comment type="subunit">
    <text evidence="1">Part of the 50S ribosomal subunit.</text>
</comment>
<comment type="similarity">
    <text evidence="1">Belongs to the universal ribosomal protein uL22 family.</text>
</comment>
<accession>B1I8K3</accession>
<protein>
    <recommendedName>
        <fullName evidence="1">Large ribosomal subunit protein uL22</fullName>
    </recommendedName>
    <alternativeName>
        <fullName evidence="2">50S ribosomal protein L22</fullName>
    </alternativeName>
</protein>
<evidence type="ECO:0000255" key="1">
    <source>
        <dbReference type="HAMAP-Rule" id="MF_01331"/>
    </source>
</evidence>
<evidence type="ECO:0000305" key="2"/>
<gene>
    <name evidence="1" type="primary">rplV</name>
    <name type="ordered locus">SPH_0328</name>
</gene>
<feature type="chain" id="PRO_1000142316" description="Large ribosomal subunit protein uL22">
    <location>
        <begin position="1"/>
        <end position="114"/>
    </location>
</feature>
<name>RL22_STRPI</name>
<sequence length="114" mass="12200">MAEITSAKAMARTVRVSPRKSRLVLDNIRGKSVADAIAILTFTPNKAAEIILKVLNSAVANAENNFGLDKANLVVSEAFANEGPTMKRFRPRAKGSASPINKRTAHITVAVAEK</sequence>
<reference key="1">
    <citation type="journal article" date="2010" name="Genome Biol.">
        <title>Structure and dynamics of the pan-genome of Streptococcus pneumoniae and closely related species.</title>
        <authorList>
            <person name="Donati C."/>
            <person name="Hiller N.L."/>
            <person name="Tettelin H."/>
            <person name="Muzzi A."/>
            <person name="Croucher N.J."/>
            <person name="Angiuoli S.V."/>
            <person name="Oggioni M."/>
            <person name="Dunning Hotopp J.C."/>
            <person name="Hu F.Z."/>
            <person name="Riley D.R."/>
            <person name="Covacci A."/>
            <person name="Mitchell T.J."/>
            <person name="Bentley S.D."/>
            <person name="Kilian M."/>
            <person name="Ehrlich G.D."/>
            <person name="Rappuoli R."/>
            <person name="Moxon E.R."/>
            <person name="Masignani V."/>
        </authorList>
    </citation>
    <scope>NUCLEOTIDE SEQUENCE [LARGE SCALE GENOMIC DNA]</scope>
    <source>
        <strain>Hungary19A-6</strain>
    </source>
</reference>
<dbReference type="EMBL" id="CP000936">
    <property type="protein sequence ID" value="ACA36008.1"/>
    <property type="molecule type" value="Genomic_DNA"/>
</dbReference>
<dbReference type="RefSeq" id="WP_000818137.1">
    <property type="nucleotide sequence ID" value="NC_010380.1"/>
</dbReference>
<dbReference type="SMR" id="B1I8K3"/>
<dbReference type="GeneID" id="93738962"/>
<dbReference type="KEGG" id="spv:SPH_0328"/>
<dbReference type="HOGENOM" id="CLU_083987_3_3_9"/>
<dbReference type="Proteomes" id="UP000002163">
    <property type="component" value="Chromosome"/>
</dbReference>
<dbReference type="GO" id="GO:0022625">
    <property type="term" value="C:cytosolic large ribosomal subunit"/>
    <property type="evidence" value="ECO:0007669"/>
    <property type="project" value="TreeGrafter"/>
</dbReference>
<dbReference type="GO" id="GO:0019843">
    <property type="term" value="F:rRNA binding"/>
    <property type="evidence" value="ECO:0007669"/>
    <property type="project" value="UniProtKB-UniRule"/>
</dbReference>
<dbReference type="GO" id="GO:0003735">
    <property type="term" value="F:structural constituent of ribosome"/>
    <property type="evidence" value="ECO:0007669"/>
    <property type="project" value="InterPro"/>
</dbReference>
<dbReference type="GO" id="GO:0006412">
    <property type="term" value="P:translation"/>
    <property type="evidence" value="ECO:0007669"/>
    <property type="project" value="UniProtKB-UniRule"/>
</dbReference>
<dbReference type="CDD" id="cd00336">
    <property type="entry name" value="Ribosomal_L22"/>
    <property type="match status" value="1"/>
</dbReference>
<dbReference type="FunFam" id="3.90.470.10:FF:000001">
    <property type="entry name" value="50S ribosomal protein L22"/>
    <property type="match status" value="1"/>
</dbReference>
<dbReference type="Gene3D" id="3.90.470.10">
    <property type="entry name" value="Ribosomal protein L22/L17"/>
    <property type="match status" value="1"/>
</dbReference>
<dbReference type="HAMAP" id="MF_01331_B">
    <property type="entry name" value="Ribosomal_uL22_B"/>
    <property type="match status" value="1"/>
</dbReference>
<dbReference type="InterPro" id="IPR001063">
    <property type="entry name" value="Ribosomal_uL22"/>
</dbReference>
<dbReference type="InterPro" id="IPR005727">
    <property type="entry name" value="Ribosomal_uL22_bac/chlpt-type"/>
</dbReference>
<dbReference type="InterPro" id="IPR047867">
    <property type="entry name" value="Ribosomal_uL22_bac/org-type"/>
</dbReference>
<dbReference type="InterPro" id="IPR018260">
    <property type="entry name" value="Ribosomal_uL22_CS"/>
</dbReference>
<dbReference type="InterPro" id="IPR036394">
    <property type="entry name" value="Ribosomal_uL22_sf"/>
</dbReference>
<dbReference type="NCBIfam" id="TIGR01044">
    <property type="entry name" value="rplV_bact"/>
    <property type="match status" value="1"/>
</dbReference>
<dbReference type="PANTHER" id="PTHR13501">
    <property type="entry name" value="CHLOROPLAST 50S RIBOSOMAL PROTEIN L22-RELATED"/>
    <property type="match status" value="1"/>
</dbReference>
<dbReference type="PANTHER" id="PTHR13501:SF8">
    <property type="entry name" value="LARGE RIBOSOMAL SUBUNIT PROTEIN UL22M"/>
    <property type="match status" value="1"/>
</dbReference>
<dbReference type="Pfam" id="PF00237">
    <property type="entry name" value="Ribosomal_L22"/>
    <property type="match status" value="1"/>
</dbReference>
<dbReference type="SUPFAM" id="SSF54843">
    <property type="entry name" value="Ribosomal protein L22"/>
    <property type="match status" value="1"/>
</dbReference>
<dbReference type="PROSITE" id="PS00464">
    <property type="entry name" value="RIBOSOMAL_L22"/>
    <property type="match status" value="1"/>
</dbReference>
<organism>
    <name type="scientific">Streptococcus pneumoniae (strain Hungary19A-6)</name>
    <dbReference type="NCBI Taxonomy" id="487214"/>
    <lineage>
        <taxon>Bacteria</taxon>
        <taxon>Bacillati</taxon>
        <taxon>Bacillota</taxon>
        <taxon>Bacilli</taxon>
        <taxon>Lactobacillales</taxon>
        <taxon>Streptococcaceae</taxon>
        <taxon>Streptococcus</taxon>
    </lineage>
</organism>